<proteinExistence type="inferred from homology"/>
<gene>
    <name type="ordered locus">CPS_4433</name>
</gene>
<comment type="similarity">
    <text evidence="1">Belongs to the UPF0102 family.</text>
</comment>
<sequence length="129" mass="14642">MLWNNKTSAKNTSSTDKGQVTESYAQQYLSKQGLRFIERNFHSRQGEIDLIMLDGDTYVFVEVKYRKSKGFGGAIAAISASKQNKVKHCITFYLHQNGLNEYNTPCRVDVVALEGDITQPQVTWLKNAF</sequence>
<accession>Q47VU1</accession>
<feature type="chain" id="PRO_0000336162" description="UPF0102 protein CPS_4433">
    <location>
        <begin position="1"/>
        <end position="129"/>
    </location>
</feature>
<evidence type="ECO:0000255" key="1">
    <source>
        <dbReference type="HAMAP-Rule" id="MF_00048"/>
    </source>
</evidence>
<organism>
    <name type="scientific">Colwellia psychrerythraea (strain 34H / ATCC BAA-681)</name>
    <name type="common">Vibrio psychroerythus</name>
    <dbReference type="NCBI Taxonomy" id="167879"/>
    <lineage>
        <taxon>Bacteria</taxon>
        <taxon>Pseudomonadati</taxon>
        <taxon>Pseudomonadota</taxon>
        <taxon>Gammaproteobacteria</taxon>
        <taxon>Alteromonadales</taxon>
        <taxon>Colwelliaceae</taxon>
        <taxon>Colwellia</taxon>
    </lineage>
</organism>
<reference key="1">
    <citation type="journal article" date="2005" name="Proc. Natl. Acad. Sci. U.S.A.">
        <title>The psychrophilic lifestyle as revealed by the genome sequence of Colwellia psychrerythraea 34H through genomic and proteomic analyses.</title>
        <authorList>
            <person name="Methe B.A."/>
            <person name="Nelson K.E."/>
            <person name="Deming J.W."/>
            <person name="Momen B."/>
            <person name="Melamud E."/>
            <person name="Zhang X."/>
            <person name="Moult J."/>
            <person name="Madupu R."/>
            <person name="Nelson W.C."/>
            <person name="Dodson R.J."/>
            <person name="Brinkac L.M."/>
            <person name="Daugherty S.C."/>
            <person name="Durkin A.S."/>
            <person name="DeBoy R.T."/>
            <person name="Kolonay J.F."/>
            <person name="Sullivan S.A."/>
            <person name="Zhou L."/>
            <person name="Davidsen T.M."/>
            <person name="Wu M."/>
            <person name="Huston A.L."/>
            <person name="Lewis M."/>
            <person name="Weaver B."/>
            <person name="Weidman J.F."/>
            <person name="Khouri H."/>
            <person name="Utterback T.R."/>
            <person name="Feldblyum T.V."/>
            <person name="Fraser C.M."/>
        </authorList>
    </citation>
    <scope>NUCLEOTIDE SEQUENCE [LARGE SCALE GENOMIC DNA]</scope>
    <source>
        <strain>34H / ATCC BAA-681</strain>
    </source>
</reference>
<protein>
    <recommendedName>
        <fullName evidence="1">UPF0102 protein CPS_4433</fullName>
    </recommendedName>
</protein>
<name>Y4433_COLP3</name>
<dbReference type="EMBL" id="CP000083">
    <property type="protein sequence ID" value="AAZ27944.1"/>
    <property type="molecule type" value="Genomic_DNA"/>
</dbReference>
<dbReference type="SMR" id="Q47VU1"/>
<dbReference type="STRING" id="167879.CPS_4433"/>
<dbReference type="DNASU" id="3522203"/>
<dbReference type="KEGG" id="cps:CPS_4433"/>
<dbReference type="HOGENOM" id="CLU_115353_1_1_6"/>
<dbReference type="Proteomes" id="UP000000547">
    <property type="component" value="Chromosome"/>
</dbReference>
<dbReference type="GO" id="GO:0003676">
    <property type="term" value="F:nucleic acid binding"/>
    <property type="evidence" value="ECO:0007669"/>
    <property type="project" value="InterPro"/>
</dbReference>
<dbReference type="CDD" id="cd20736">
    <property type="entry name" value="PoNe_Nuclease"/>
    <property type="match status" value="1"/>
</dbReference>
<dbReference type="Gene3D" id="3.40.1350.10">
    <property type="match status" value="1"/>
</dbReference>
<dbReference type="HAMAP" id="MF_00048">
    <property type="entry name" value="UPF0102"/>
    <property type="match status" value="1"/>
</dbReference>
<dbReference type="InterPro" id="IPR011335">
    <property type="entry name" value="Restrct_endonuc-II-like"/>
</dbReference>
<dbReference type="InterPro" id="IPR011856">
    <property type="entry name" value="tRNA_endonuc-like_dom_sf"/>
</dbReference>
<dbReference type="InterPro" id="IPR003509">
    <property type="entry name" value="UPF0102_YraN-like"/>
</dbReference>
<dbReference type="NCBIfam" id="NF009150">
    <property type="entry name" value="PRK12497.1-3"/>
    <property type="match status" value="1"/>
</dbReference>
<dbReference type="NCBIfam" id="TIGR00252">
    <property type="entry name" value="YraN family protein"/>
    <property type="match status" value="1"/>
</dbReference>
<dbReference type="PANTHER" id="PTHR34039">
    <property type="entry name" value="UPF0102 PROTEIN YRAN"/>
    <property type="match status" value="1"/>
</dbReference>
<dbReference type="PANTHER" id="PTHR34039:SF1">
    <property type="entry name" value="UPF0102 PROTEIN YRAN"/>
    <property type="match status" value="1"/>
</dbReference>
<dbReference type="Pfam" id="PF02021">
    <property type="entry name" value="UPF0102"/>
    <property type="match status" value="1"/>
</dbReference>
<dbReference type="SUPFAM" id="SSF52980">
    <property type="entry name" value="Restriction endonuclease-like"/>
    <property type="match status" value="1"/>
</dbReference>